<protein>
    <recommendedName>
        <fullName evidence="1">Hydroxymethylglutaryl-CoA synthase</fullName>
        <shortName evidence="1">HMG-CoA synthase</shortName>
        <shortName evidence="1">HMGCS</shortName>
        <ecNumber evidence="1">2.3.3.10</ecNumber>
    </recommendedName>
</protein>
<gene>
    <name type="ordered locus">Pcal_1082</name>
</gene>
<organism>
    <name type="scientific">Pyrobaculum calidifontis (strain DSM 21063 / JCM 11548 / VA1)</name>
    <dbReference type="NCBI Taxonomy" id="410359"/>
    <lineage>
        <taxon>Archaea</taxon>
        <taxon>Thermoproteota</taxon>
        <taxon>Thermoprotei</taxon>
        <taxon>Thermoproteales</taxon>
        <taxon>Thermoproteaceae</taxon>
        <taxon>Pyrobaculum</taxon>
    </lineage>
</organism>
<proteinExistence type="inferred from homology"/>
<accession>A3MV40</accession>
<sequence length="350" mass="38066">MSKLGVVSWGAYIPRYRVRTEEVSRIWGDDPLRIVDMYLVDEKSVEGIDEDAVTIAVEAARRAIRRGGIDPRKIGAVYVGTESKPYAVKPISSILIDALGLTNNVFAVDMEFACKAGSDGLVAAIGLVEAGRVEYGMTVGTDTSQGEPGEHLEYSASSGGVALIVGKDGVAAELEAMYAFVSDTPDFWRREGSPYPMHGEGFTGEPAYFRHVIGAAKGLMEKYGYKPSDFTYVVFHQPNGRFPVRAASMLNIPLDKVKPGIVVTHIGNTYNASALMGFAKVLDIAKPGDKILLVPFGSGAGSNAFVFTVTDVVKDRQKMGVPTVEEMLQDKILVDYAQYLKMRKMIKLFE</sequence>
<dbReference type="EC" id="2.3.3.10" evidence="1"/>
<dbReference type="EMBL" id="CP000561">
    <property type="protein sequence ID" value="ABO08507.1"/>
    <property type="molecule type" value="Genomic_DNA"/>
</dbReference>
<dbReference type="RefSeq" id="WP_011849765.1">
    <property type="nucleotide sequence ID" value="NC_009073.1"/>
</dbReference>
<dbReference type="SMR" id="A3MV40"/>
<dbReference type="STRING" id="410359.Pcal_1082"/>
<dbReference type="GeneID" id="4909657"/>
<dbReference type="KEGG" id="pcl:Pcal_1082"/>
<dbReference type="eggNOG" id="arCOG01767">
    <property type="taxonomic scope" value="Archaea"/>
</dbReference>
<dbReference type="HOGENOM" id="CLU_039592_7_0_2"/>
<dbReference type="OrthoDB" id="5812at2157"/>
<dbReference type="UniPathway" id="UPA00058">
    <property type="reaction ID" value="UER00102"/>
</dbReference>
<dbReference type="Proteomes" id="UP000001431">
    <property type="component" value="Chromosome"/>
</dbReference>
<dbReference type="GO" id="GO:0003985">
    <property type="term" value="F:acetyl-CoA C-acetyltransferase activity"/>
    <property type="evidence" value="ECO:0007669"/>
    <property type="project" value="UniProtKB-UniRule"/>
</dbReference>
<dbReference type="GO" id="GO:0004421">
    <property type="term" value="F:hydroxymethylglutaryl-CoA synthase activity"/>
    <property type="evidence" value="ECO:0007669"/>
    <property type="project" value="InterPro"/>
</dbReference>
<dbReference type="GO" id="GO:0010142">
    <property type="term" value="P:farnesyl diphosphate biosynthetic process, mevalonate pathway"/>
    <property type="evidence" value="ECO:0007669"/>
    <property type="project" value="TreeGrafter"/>
</dbReference>
<dbReference type="GO" id="GO:0019287">
    <property type="term" value="P:isopentenyl diphosphate biosynthetic process, mevalonate pathway"/>
    <property type="evidence" value="ECO:0007669"/>
    <property type="project" value="UniProtKB-UniRule"/>
</dbReference>
<dbReference type="CDD" id="cd00827">
    <property type="entry name" value="init_cond_enzymes"/>
    <property type="match status" value="1"/>
</dbReference>
<dbReference type="FunFam" id="3.40.47.10:FF:000046">
    <property type="entry name" value="UPF0219 protein M1627_1703"/>
    <property type="match status" value="1"/>
</dbReference>
<dbReference type="Gene3D" id="3.40.47.10">
    <property type="match status" value="1"/>
</dbReference>
<dbReference type="HAMAP" id="MF_01409">
    <property type="entry name" value="HMG_CoA_synth_arch"/>
    <property type="match status" value="1"/>
</dbReference>
<dbReference type="InterPro" id="IPR013747">
    <property type="entry name" value="ACP_syn_III_C"/>
</dbReference>
<dbReference type="InterPro" id="IPR004656">
    <property type="entry name" value="HMG_CoA_Synthase"/>
</dbReference>
<dbReference type="InterPro" id="IPR016039">
    <property type="entry name" value="Thiolase-like"/>
</dbReference>
<dbReference type="NCBIfam" id="TIGR00748">
    <property type="entry name" value="HMG_CoA_syn_Arc"/>
    <property type="match status" value="1"/>
</dbReference>
<dbReference type="NCBIfam" id="NF003274">
    <property type="entry name" value="PRK04262.1"/>
    <property type="match status" value="1"/>
</dbReference>
<dbReference type="PANTHER" id="PTHR43323">
    <property type="entry name" value="3-HYDROXY-3-METHYLGLUTARYL COENZYME A SYNTHASE"/>
    <property type="match status" value="1"/>
</dbReference>
<dbReference type="PANTHER" id="PTHR43323:SF2">
    <property type="entry name" value="HYDROXYMETHYLGLUTARYL-COA SYNTHASE"/>
    <property type="match status" value="1"/>
</dbReference>
<dbReference type="Pfam" id="PF08541">
    <property type="entry name" value="ACP_syn_III_C"/>
    <property type="match status" value="1"/>
</dbReference>
<dbReference type="SUPFAM" id="SSF53901">
    <property type="entry name" value="Thiolase-like"/>
    <property type="match status" value="2"/>
</dbReference>
<comment type="function">
    <text evidence="1">Catalyzes the condensation of acetyl-CoA with acetoacetyl-CoA to form 3-hydroxy-3-methylglutaryl-CoA (HMG-CoA). Functions in the mevalonate (MVA) pathway leading to isopentenyl diphosphate (IPP), a key precursor for the biosynthesis of isoprenoid compounds that are building blocks of archaeal membrane lipids.</text>
</comment>
<comment type="catalytic activity">
    <reaction evidence="1">
        <text>acetoacetyl-CoA + acetyl-CoA + H2O = (3S)-3-hydroxy-3-methylglutaryl-CoA + CoA + H(+)</text>
        <dbReference type="Rhea" id="RHEA:10188"/>
        <dbReference type="ChEBI" id="CHEBI:15377"/>
        <dbReference type="ChEBI" id="CHEBI:15378"/>
        <dbReference type="ChEBI" id="CHEBI:43074"/>
        <dbReference type="ChEBI" id="CHEBI:57286"/>
        <dbReference type="ChEBI" id="CHEBI:57287"/>
        <dbReference type="ChEBI" id="CHEBI:57288"/>
        <dbReference type="EC" id="2.3.3.10"/>
    </reaction>
    <physiologicalReaction direction="left-to-right" evidence="1">
        <dbReference type="Rhea" id="RHEA:10189"/>
    </physiologicalReaction>
</comment>
<comment type="pathway">
    <text evidence="1">Metabolic intermediate biosynthesis; (R)-mevalonate biosynthesis; (R)-mevalonate from acetyl-CoA: step 2/3.</text>
</comment>
<comment type="subunit">
    <text evidence="1">Interacts with acetoacetyl-CoA thiolase that catalyzes the precedent step in the pathway and with a DUF35 protein. The acetoacetyl-CoA thiolase/HMG-CoA synthase complex channels the intermediate via a fused CoA-binding site, which allows for efficient coupling of the endergonic thiolase reaction with the exergonic HMGCS reaction.</text>
</comment>
<comment type="similarity">
    <text evidence="1">Belongs to the thiolase-like superfamily. Archaeal HMG-CoA synthase family.</text>
</comment>
<name>HMGCS_PYRCJ</name>
<evidence type="ECO:0000255" key="1">
    <source>
        <dbReference type="HAMAP-Rule" id="MF_01409"/>
    </source>
</evidence>
<keyword id="KW-0012">Acyltransferase</keyword>
<keyword id="KW-0414">Isoprene biosynthesis</keyword>
<keyword id="KW-0808">Transferase</keyword>
<reference key="1">
    <citation type="submission" date="2007-02" db="EMBL/GenBank/DDBJ databases">
        <title>Complete sequence of Pyrobaculum calidifontis JCM 11548.</title>
        <authorList>
            <consortium name="US DOE Joint Genome Institute"/>
            <person name="Copeland A."/>
            <person name="Lucas S."/>
            <person name="Lapidus A."/>
            <person name="Barry K."/>
            <person name="Glavina del Rio T."/>
            <person name="Dalin E."/>
            <person name="Tice H."/>
            <person name="Pitluck S."/>
            <person name="Chain P."/>
            <person name="Malfatti S."/>
            <person name="Shin M."/>
            <person name="Vergez L."/>
            <person name="Schmutz J."/>
            <person name="Larimer F."/>
            <person name="Land M."/>
            <person name="Hauser L."/>
            <person name="Kyrpides N."/>
            <person name="Mikhailova N."/>
            <person name="Cozen A.E."/>
            <person name="Fitz-Gibbon S.T."/>
            <person name="House C.H."/>
            <person name="Saltikov C."/>
            <person name="Lowe T.M."/>
            <person name="Richardson P."/>
        </authorList>
    </citation>
    <scope>NUCLEOTIDE SEQUENCE [LARGE SCALE GENOMIC DNA]</scope>
    <source>
        <strain>DSM 21063 / JCM 11548 / VA1</strain>
    </source>
</reference>
<feature type="chain" id="PRO_1000068448" description="Hydroxymethylglutaryl-CoA synthase">
    <location>
        <begin position="1"/>
        <end position="350"/>
    </location>
</feature>
<feature type="active site" description="Proton donor/acceptor" evidence="1">
    <location>
        <position position="82"/>
    </location>
</feature>
<feature type="active site" description="Acyl-thioester intermediate" evidence="1">
    <location>
        <position position="114"/>
    </location>
</feature>
<feature type="active site" description="Proton donor/acceptor" evidence="1">
    <location>
        <position position="236"/>
    </location>
</feature>
<feature type="binding site" evidence="1">
    <location>
        <position position="30"/>
    </location>
    <ligand>
        <name>(3S)-3-hydroxy-3-methylglutaryl-CoA</name>
        <dbReference type="ChEBI" id="CHEBI:43074"/>
    </ligand>
</feature>
<feature type="binding site" evidence="1">
    <location>
        <position position="114"/>
    </location>
    <ligand>
        <name>(3S)-3-hydroxy-3-methylglutaryl-CoA</name>
        <dbReference type="ChEBI" id="CHEBI:43074"/>
    </ligand>
</feature>
<feature type="binding site" evidence="1">
    <location>
        <position position="155"/>
    </location>
    <ligand>
        <name>(3S)-3-hydroxy-3-methylglutaryl-CoA</name>
        <dbReference type="ChEBI" id="CHEBI:43074"/>
    </ligand>
</feature>
<feature type="binding site" evidence="1">
    <location>
        <position position="203"/>
    </location>
    <ligand>
        <name>(3S)-3-hydroxy-3-methylglutaryl-CoA</name>
        <dbReference type="ChEBI" id="CHEBI:43074"/>
    </ligand>
</feature>
<feature type="binding site" evidence="1">
    <location>
        <position position="236"/>
    </location>
    <ligand>
        <name>(3S)-3-hydroxy-3-methylglutaryl-CoA</name>
        <dbReference type="ChEBI" id="CHEBI:43074"/>
    </ligand>
</feature>
<feature type="binding site" evidence="1">
    <location>
        <position position="241"/>
    </location>
    <ligand>
        <name>CoA</name>
        <dbReference type="ChEBI" id="CHEBI:57287"/>
        <note>ligand shared with acetoacetyl-CoA thiolase</note>
    </ligand>
</feature>
<feature type="binding site" evidence="1">
    <location>
        <position position="245"/>
    </location>
    <ligand>
        <name>(3S)-3-hydroxy-3-methylglutaryl-CoA</name>
        <dbReference type="ChEBI" id="CHEBI:43074"/>
    </ligand>
</feature>
<feature type="binding site" evidence="1">
    <location>
        <position position="268"/>
    </location>
    <ligand>
        <name>(3S)-3-hydroxy-3-methylglutaryl-CoA</name>
        <dbReference type="ChEBI" id="CHEBI:43074"/>
    </ligand>
</feature>
<feature type="binding site" evidence="1">
    <location>
        <position position="298"/>
    </location>
    <ligand>
        <name>(3S)-3-hydroxy-3-methylglutaryl-CoA</name>
        <dbReference type="ChEBI" id="CHEBI:43074"/>
    </ligand>
</feature>